<sequence>MNDFITETWLRANHTLSEGSEIHLPADARLTPSARELLESRRLRIKFLDPQGRLFVDDDEQQPQPVHGLTSSDTHPQACCELCRQPVVKKPDTLTHLTADKMVAKSDPRLGFRAALDSAIALTVWLQIELAEPWQPWLFDIRSRLGNIMRADAIDEPLAAQSIVGLNEDELHRLSHQPLRYLDHDHLVPEASHGRDAALLNLLRTKVRETETLAAQVFITRSFEVLRPDILQALNRLSSTVYVMMILSVAKHPLTVAQIQQRLGEKP</sequence>
<name>EUTT_SALTY</name>
<organism>
    <name type="scientific">Salmonella typhimurium (strain LT2 / SGSC1412 / ATCC 700720)</name>
    <dbReference type="NCBI Taxonomy" id="99287"/>
    <lineage>
        <taxon>Bacteria</taxon>
        <taxon>Pseudomonadati</taxon>
        <taxon>Pseudomonadota</taxon>
        <taxon>Gammaproteobacteria</taxon>
        <taxon>Enterobacterales</taxon>
        <taxon>Enterobacteriaceae</taxon>
        <taxon>Salmonella</taxon>
    </lineage>
</organism>
<feature type="chain" id="PRO_0000087101" description="Corrinoid adenosyltransferase EutT">
    <location>
        <begin position="1"/>
        <end position="267"/>
    </location>
</feature>
<feature type="binding site" evidence="14 15 16">
    <location>
        <position position="80"/>
    </location>
    <ligand>
        <name>a divalent metal cation</name>
        <dbReference type="ChEBI" id="CHEBI:60240"/>
        <note>ligand shared between homodimeric partners</note>
    </ligand>
</feature>
<feature type="binding site" evidence="14 15 16">
    <location>
        <position position="83"/>
    </location>
    <ligand>
        <name>a divalent metal cation</name>
        <dbReference type="ChEBI" id="CHEBI:60240"/>
        <note>ligand shared between homodimeric partners</note>
    </ligand>
</feature>
<feature type="mutagenesis site" description="Reduces metal content of enzyme, does not complement deletion. No binding of Co(2+)." evidence="5 6">
    <original>H</original>
    <variation>A</variation>
    <location>
        <position position="67"/>
    </location>
</feature>
<feature type="mutagenesis site" description="No effect in vivo or in vitro. No binding of Co(2+)." evidence="5 6">
    <original>H</original>
    <variation>A</variation>
    <location>
        <position position="75"/>
    </location>
</feature>
<feature type="mutagenesis site" description="Does not complement deletion, 20% activity in vitro. Reduces metal content of enzyme, complements a deletion." evidence="4 5 6">
    <original>C</original>
    <variation>A</variation>
    <location>
        <position position="79"/>
    </location>
</feature>
<feature type="mutagenesis site" description="Does not complement deletion, 0.6% activity in vitro. No metal cofactor." evidence="4 5 6">
    <original>C</original>
    <variation>A</variation>
    <location>
        <position position="80"/>
    </location>
</feature>
<feature type="mutagenesis site" description="Does not complement deletion, 1.2% activity in vitro. No metal cofactor." evidence="4 5 6">
    <original>C</original>
    <variation>A</variation>
    <location>
        <position position="83"/>
    </location>
</feature>
<evidence type="ECO:0000269" key="1">
    <source>
    </source>
</evidence>
<evidence type="ECO:0000269" key="2">
    <source>
    </source>
</evidence>
<evidence type="ECO:0000269" key="3">
    <source>
    </source>
</evidence>
<evidence type="ECO:0000269" key="4">
    <source>
    </source>
</evidence>
<evidence type="ECO:0000269" key="5">
    <source>
    </source>
</evidence>
<evidence type="ECO:0000269" key="6">
    <source>
    </source>
</evidence>
<evidence type="ECO:0000269" key="7">
    <source>
    </source>
</evidence>
<evidence type="ECO:0000269" key="8">
    <source>
    </source>
</evidence>
<evidence type="ECO:0000303" key="9">
    <source>
    </source>
</evidence>
<evidence type="ECO:0000303" key="10">
    <source>
    </source>
</evidence>
<evidence type="ECO:0000303" key="11">
    <source>
    </source>
</evidence>
<evidence type="ECO:0000303" key="12">
    <source>
    </source>
</evidence>
<evidence type="ECO:0000305" key="13"/>
<evidence type="ECO:0000305" key="14">
    <source>
    </source>
</evidence>
<evidence type="ECO:0000305" key="15">
    <source>
    </source>
</evidence>
<evidence type="ECO:0000305" key="16">
    <source>
    </source>
</evidence>
<protein>
    <recommendedName>
        <fullName evidence="13">Corrinoid adenosyltransferase EutT</fullName>
        <ecNumber evidence="4">2.5.1.154</ecNumber>
    </recommendedName>
    <alternativeName>
        <fullName evidence="11">ATP:co(I)rrinoid adenosyltransferase</fullName>
        <shortName evidence="12">ACAT</shortName>
    </alternativeName>
    <alternativeName>
        <fullName evidence="10">Cob(II)alamin adenosyltransferase EutT</fullName>
    </alternativeName>
    <alternativeName>
        <fullName>Ethanolamine utilization cobalamin adenosyltransferase</fullName>
    </alternativeName>
    <alternativeName>
        <fullName>Ethanolamine utilization corrinoid adenosyltransferase</fullName>
    </alternativeName>
    <alternativeName>
        <fullName evidence="10">EutT adenosyltransferase</fullName>
    </alternativeName>
</protein>
<proteinExistence type="evidence at protein level"/>
<dbReference type="EC" id="2.5.1.154" evidence="4"/>
<dbReference type="EMBL" id="AF093749">
    <property type="protein sequence ID" value="AAC78114.1"/>
    <property type="molecule type" value="Genomic_DNA"/>
</dbReference>
<dbReference type="EMBL" id="AE006468">
    <property type="protein sequence ID" value="AAL21361.1"/>
    <property type="molecule type" value="Genomic_DNA"/>
</dbReference>
<dbReference type="RefSeq" id="NP_461402.1">
    <property type="nucleotide sequence ID" value="NC_003197.2"/>
</dbReference>
<dbReference type="RefSeq" id="WP_000997656.1">
    <property type="nucleotide sequence ID" value="NC_003197.2"/>
</dbReference>
<dbReference type="SMR" id="Q9ZFV4"/>
<dbReference type="STRING" id="99287.STM2467"/>
<dbReference type="PaxDb" id="99287-STM2467"/>
<dbReference type="GeneID" id="1253989"/>
<dbReference type="KEGG" id="stm:STM2467"/>
<dbReference type="PATRIC" id="fig|99287.12.peg.2605"/>
<dbReference type="HOGENOM" id="CLU_093470_1_0_6"/>
<dbReference type="OMA" id="ACCELCH"/>
<dbReference type="PhylomeDB" id="Q9ZFV4"/>
<dbReference type="BioCyc" id="MetaCyc:STM2467-MONOMER"/>
<dbReference type="BioCyc" id="SENT99287:STM2467-MONOMER"/>
<dbReference type="UniPathway" id="UPA00560"/>
<dbReference type="Proteomes" id="UP000001014">
    <property type="component" value="Chromosome"/>
</dbReference>
<dbReference type="GO" id="GO:0031469">
    <property type="term" value="C:bacterial microcompartment"/>
    <property type="evidence" value="ECO:0007669"/>
    <property type="project" value="UniProtKB-SubCell"/>
</dbReference>
<dbReference type="GO" id="GO:0005524">
    <property type="term" value="F:ATP binding"/>
    <property type="evidence" value="ECO:0007669"/>
    <property type="project" value="UniProtKB-KW"/>
</dbReference>
<dbReference type="GO" id="GO:0008817">
    <property type="term" value="F:corrinoid adenosyltransferase activity"/>
    <property type="evidence" value="ECO:0007669"/>
    <property type="project" value="InterPro"/>
</dbReference>
<dbReference type="GO" id="GO:0046872">
    <property type="term" value="F:metal ion binding"/>
    <property type="evidence" value="ECO:0007669"/>
    <property type="project" value="UniProtKB-KW"/>
</dbReference>
<dbReference type="GO" id="GO:0009236">
    <property type="term" value="P:cobalamin biosynthetic process"/>
    <property type="evidence" value="ECO:0007669"/>
    <property type="project" value="InterPro"/>
</dbReference>
<dbReference type="GO" id="GO:0046336">
    <property type="term" value="P:ethanolamine catabolic process"/>
    <property type="evidence" value="ECO:0007669"/>
    <property type="project" value="UniProtKB-UniPathway"/>
</dbReference>
<dbReference type="Gene3D" id="1.20.1200.10">
    <property type="entry name" value="Cobalamin adenosyltransferase-like"/>
    <property type="match status" value="1"/>
</dbReference>
<dbReference type="InterPro" id="IPR009194">
    <property type="entry name" value="AdoTrfase_EutT"/>
</dbReference>
<dbReference type="InterPro" id="IPR016030">
    <property type="entry name" value="CblAdoTrfase-like"/>
</dbReference>
<dbReference type="InterPro" id="IPR036451">
    <property type="entry name" value="CblAdoTrfase-like_sf"/>
</dbReference>
<dbReference type="NCBIfam" id="NF011595">
    <property type="entry name" value="PRK15020.1"/>
    <property type="match status" value="1"/>
</dbReference>
<dbReference type="Pfam" id="PF01923">
    <property type="entry name" value="Cob_adeno_trans"/>
    <property type="match status" value="1"/>
</dbReference>
<dbReference type="PIRSF" id="PIRSF012294">
    <property type="entry name" value="ATR_EutT"/>
    <property type="match status" value="1"/>
</dbReference>
<dbReference type="SUPFAM" id="SSF89028">
    <property type="entry name" value="Cobalamin adenosyltransferase-like"/>
    <property type="match status" value="1"/>
</dbReference>
<comment type="function">
    <text evidence="2 4 5">Converts cyanocobalamin (CN-B12) to adenosylcobalamin (AdoCbl), the inducer of the eut operon (PubMed:15516577, PubMed:16636051, PubMed:24336938). Is not active on cobinamide nor other intermediates in the adenosylcobalamin synthetic pathway. Allows full induction of the eut operon (PubMed:15516577). Can use ADP, CTP and dATP in place of ATP, and cobinamide in place of cobalamin, none are as efficiently used as ATP and cobalamin (PubMed:16636051).</text>
</comment>
<comment type="function">
    <text evidence="7 8">Expression of the eut operon allows this bacteria to use ethanolamine (EA) as a carbon, nitrogen and energy source. It relies on cobalamin (vitamin B12) both as a cofactor for the ethanolamine ammonia-lyase (EAL) activity and to induce the operon (PubMed:3045078). EA enhances bacterial survival in macrophages in a concentration-dependent manner, suggesting it is an important nutrient during infection (PubMed:29531136).</text>
</comment>
<comment type="catalytic activity">
    <reaction evidence="4">
        <text>2 cob(II)alamin + reduced [electron-transfer flavoprotein] + 2 ATP + 2 H2O = 2 adenosylcob(III)alamin + oxidized [electron-transfer flavoprotein] + 2 phosphate + 2 diphosphate + 3 H(+)</text>
        <dbReference type="Rhea" id="RHEA:66828"/>
        <dbReference type="Rhea" id="RHEA-COMP:10685"/>
        <dbReference type="Rhea" id="RHEA-COMP:10686"/>
        <dbReference type="ChEBI" id="CHEBI:15377"/>
        <dbReference type="ChEBI" id="CHEBI:15378"/>
        <dbReference type="ChEBI" id="CHEBI:16304"/>
        <dbReference type="ChEBI" id="CHEBI:18408"/>
        <dbReference type="ChEBI" id="CHEBI:30616"/>
        <dbReference type="ChEBI" id="CHEBI:33019"/>
        <dbReference type="ChEBI" id="CHEBI:43474"/>
        <dbReference type="ChEBI" id="CHEBI:57692"/>
        <dbReference type="ChEBI" id="CHEBI:58307"/>
        <dbReference type="EC" id="2.5.1.154"/>
    </reaction>
</comment>
<comment type="catalytic activity">
    <reaction evidence="4">
        <text>2 cob(II)inamide + reduced [electron-transfer flavoprotein] + 2 ATP + 2 H2O = 2 adenosylcob(III)inamide + oxidized [electron-transfer flavoprotein] + 2 phosphate + 2 diphosphate + 3 H(+)</text>
        <dbReference type="Rhea" id="RHEA:66824"/>
        <dbReference type="Rhea" id="RHEA-COMP:10685"/>
        <dbReference type="Rhea" id="RHEA-COMP:10686"/>
        <dbReference type="ChEBI" id="CHEBI:2480"/>
        <dbReference type="ChEBI" id="CHEBI:15377"/>
        <dbReference type="ChEBI" id="CHEBI:15378"/>
        <dbReference type="ChEBI" id="CHEBI:30616"/>
        <dbReference type="ChEBI" id="CHEBI:33019"/>
        <dbReference type="ChEBI" id="CHEBI:43474"/>
        <dbReference type="ChEBI" id="CHEBI:57692"/>
        <dbReference type="ChEBI" id="CHEBI:58307"/>
        <dbReference type="ChEBI" id="CHEBI:141013"/>
        <dbReference type="EC" id="2.5.1.154"/>
    </reaction>
</comment>
<comment type="cofactor">
    <cofactor evidence="4 5 6">
        <name>a divalent metal cation</name>
        <dbReference type="ChEBI" id="CHEBI:60240"/>
    </cofactor>
    <text evidence="4 5 6">Binds 1 divalent metal cation ion per homodimer with both subunits providing Cys ligands; Fe(2+) gives most activity and is possibly the physiological cofactor, followed by Zn(2+) and Co(2+) (PubMed:24336938, PubMed:28045498). Activity stimulated by Mn(2+) (PubMed:16636051).</text>
</comment>
<comment type="biophysicochemical properties">
    <kinetics>
        <KM evidence="4">10 uM for ATP</KM>
        <KM evidence="4">4.1 uM for cob(I)alamin</KM>
        <text evidence="4">kcat is 0.03 sec(-1).</text>
    </kinetics>
    <phDependence>
        <text evidence="4">Optimum pH is 7.0.</text>
    </phDependence>
</comment>
<comment type="pathway">
    <text evidence="8">Amine and polyamine degradation; ethanolamine degradation.</text>
</comment>
<comment type="subunit">
    <text evidence="5">Homodimer.</text>
</comment>
<comment type="subcellular location">
    <subcellularLocation>
        <location evidence="13">Bacterial microcompartment</location>
    </subcellularLocation>
</comment>
<comment type="induction">
    <text evidence="8">Part of the 17-gene eut operon transcribed from a single promoter, induced by ethanolamine and adenosylcobalamin (AdoCbl, vitamin B12).</text>
</comment>
<comment type="disruption phenotype">
    <text evidence="1 2 3">A quadruple eutP-eutQ-eutT-eutD deletion is not impaired for aerobic growth on ethanolamine (EA) supplemented with cobalamin (vitamin B12) (PubMed:10464203). Can grow on EA as sole carbon source when AdoB12 is supplied; double cobA-eutT mutants do not grow with CN-B12 as a nitrogen source (PubMed:15516577). A non-polar deletion mutant grows on EA from pH 5.5 to pH 8.0, but does not grow at pH 8.5, no change in acetaldehyde release on EA plus vitamin B12 (PubMed:16585748).</text>
</comment>
<comment type="similarity">
    <text evidence="13">Belongs to the Cob(I)alamin adenosyltransferase family. EutT subfamily.</text>
</comment>
<keyword id="KW-0067">ATP-binding</keyword>
<keyword id="KW-1283">Bacterial microcompartment</keyword>
<keyword id="KW-0408">Iron</keyword>
<keyword id="KW-0479">Metal-binding</keyword>
<keyword id="KW-0547">Nucleotide-binding</keyword>
<keyword id="KW-1185">Reference proteome</keyword>
<keyword id="KW-0808">Transferase</keyword>
<accession>Q9ZFV4</accession>
<reference key="1">
    <citation type="journal article" date="1999" name="J. Bacteriol.">
        <title>The 17-gene ethanolamine (eut) operon of Salmonella typhimurium encodes five homologues of carboxysome shell proteins.</title>
        <authorList>
            <person name="Kofoid E.C."/>
            <person name="Rappleye C.A."/>
            <person name="Stojiljkovic I."/>
            <person name="Roth J.R."/>
        </authorList>
    </citation>
    <scope>NUCLEOTIDE SEQUENCE [GENOMIC DNA]</scope>
    <scope>DISRUPTION PHENOTYPE</scope>
    <source>
        <strain>LT2</strain>
    </source>
</reference>
<reference key="2">
    <citation type="journal article" date="2001" name="Nature">
        <title>Complete genome sequence of Salmonella enterica serovar Typhimurium LT2.</title>
        <authorList>
            <person name="McClelland M."/>
            <person name="Sanderson K.E."/>
            <person name="Spieth J."/>
            <person name="Clifton S.W."/>
            <person name="Latreille P."/>
            <person name="Courtney L."/>
            <person name="Porwollik S."/>
            <person name="Ali J."/>
            <person name="Dante M."/>
            <person name="Du F."/>
            <person name="Hou S."/>
            <person name="Layman D."/>
            <person name="Leonard S."/>
            <person name="Nguyen C."/>
            <person name="Scott K."/>
            <person name="Holmes A."/>
            <person name="Grewal N."/>
            <person name="Mulvaney E."/>
            <person name="Ryan E."/>
            <person name="Sun H."/>
            <person name="Florea L."/>
            <person name="Miller W."/>
            <person name="Stoneking T."/>
            <person name="Nhan M."/>
            <person name="Waterston R."/>
            <person name="Wilson R.K."/>
        </authorList>
    </citation>
    <scope>NUCLEOTIDE SEQUENCE [LARGE SCALE GENOMIC DNA]</scope>
    <source>
        <strain>LT2 / SGSC1412 / ATCC 700720</strain>
    </source>
</reference>
<reference key="3">
    <citation type="journal article" date="1988" name="J. Bacteriol.">
        <title>Ethanolamine utilization in Salmonella typhimurium.</title>
        <authorList>
            <person name="Roof D.M."/>
            <person name="Roth J.R."/>
        </authorList>
    </citation>
    <scope>FUNCTION</scope>
    <scope>PATHWAY</scope>
    <scope>OPERON</scope>
    <scope>INDUCTION BY ETHANOLAMINE AND COBALAMIN</scope>
    <source>
        <strain>LT2</strain>
    </source>
</reference>
<reference key="4">
    <citation type="journal article" date="2004" name="J. Bacteriol.">
        <title>Evidence that a B12-adenosyl transferase is encoded within the ethanolamine operon of Salmonella enterica.</title>
        <authorList>
            <person name="Sheppard D.E."/>
            <person name="Penrod J.T."/>
            <person name="Bobik T."/>
            <person name="Kofoid E."/>
            <person name="Roth J.R."/>
        </authorList>
    </citation>
    <scope>FUNCTION</scope>
    <scope>DISRUPTION PHENOTYPE</scope>
    <source>
        <strain>LT2</strain>
    </source>
</reference>
<reference key="5">
    <citation type="journal article" date="2006" name="J. Bacteriol.">
        <title>Conserving a volatile metabolite: a role for carboxysome-like organelles in Salmonella enterica.</title>
        <authorList>
            <person name="Penrod J.T."/>
            <person name="Roth J.R."/>
        </authorList>
    </citation>
    <scope>DISRUPTION PHENOTYPE</scope>
    <source>
        <strain>LT2</strain>
    </source>
</reference>
<reference key="6">
    <citation type="journal article" date="2006" name="J. Biol. Chem.">
        <title>Purification and initial biochemical characterization of ATP:Cob(I)alamin adenosyltransferase (EutT) enzyme of Salmonella enterica.</title>
        <authorList>
            <person name="Buan N.R."/>
            <person name="Escalante-Semerena J.C."/>
        </authorList>
    </citation>
    <scope>FUNCTION</scope>
    <scope>CATALYTIC ACTIVITY</scope>
    <scope>SUBSTRATE SPECIFICITY</scope>
    <scope>COFACTOR</scope>
    <scope>BIOPHYSICOCHEMICAL PROPERTIES</scope>
    <scope>MUTAGENESIS OF CYS-79; CYS-80 AND CYS-83</scope>
    <source>
        <strain>LT2</strain>
    </source>
</reference>
<reference key="7">
    <citation type="journal article" date="2014" name="J. Bacteriol.">
        <title>The EutT enzyme of Salmonella enterica is a unique ATP:Cob(I)alamin adenosyltransferase metalloprotein that requires ferrous ions for maximal activity.</title>
        <authorList>
            <person name="Moore T.C."/>
            <person name="Mera P.E."/>
            <person name="Escalante-Semerena J.C."/>
        </authorList>
    </citation>
    <scope>FUNCTION</scope>
    <scope>COFACTOR</scope>
    <scope>SUBUNIT</scope>
    <scope>MUTAGENESIS OF HIS-67; HIS-75; CYS-79; CYS-80 AND CYS-83</scope>
    <source>
        <strain>LT2</strain>
    </source>
</reference>
<reference key="8">
    <citation type="journal article" date="2017" name="Biochemistry">
        <title>Spectroscopic Studies of the EutT Adenosyltransferase from Salmonella enterica: Evidence of a Tetrahedrally Coordinated Divalent Transition Metal Cofactor with Cysteine Ligation.</title>
        <authorList>
            <person name="Pallares I.G."/>
            <person name="Moore T.C."/>
            <person name="Escalante-Semerena J.C."/>
            <person name="Brunold T.C."/>
        </authorList>
    </citation>
    <scope>COFACTOR</scope>
    <scope>MUTAGENESIS OF HIS-67; HIS-75; CYS-79; CYS-80 AND CYS-83</scope>
    <source>
        <strain>LT2</strain>
    </source>
</reference>
<reference key="9">
    <citation type="journal article" date="2018" name="Infect. Immun.">
        <title>The Ethanolamine Permease EutH Promotes Vacuole Adaptation of Salmonella enterica and Listeria monocytogenes during Macrophage Infection.</title>
        <authorList>
            <person name="Anderson C.J."/>
            <person name="Satkovich J."/>
            <person name="Koeseoglu V.K."/>
            <person name="Agaisse H."/>
            <person name="Kendall M.M."/>
        </authorList>
    </citation>
    <scope>FUNCTION</scope>
    <source>
        <strain>SL1344</strain>
    </source>
</reference>
<gene>
    <name evidence="9" type="primary">eutT</name>
    <name type="ordered locus">STM2467</name>
</gene>